<comment type="function">
    <text evidence="4">In the phosphorylated form it could act as an anti-anti-sigma factor that counteracts SpoIIAB and thus releases sigma f from inhibition.</text>
</comment>
<comment type="PTM">
    <text evidence="3">Phosphorylated by SpoIIAB on a serine residue.</text>
</comment>
<comment type="similarity">
    <text evidence="5">Belongs to the anti-sigma-factor antagonist family.</text>
</comment>
<comment type="sequence caution" evidence="5">
    <conflict type="erroneous initiation">
        <sequence resource="EMBL-CDS" id="AAA22789"/>
    </conflict>
</comment>
<keyword id="KW-0002">3D-structure</keyword>
<keyword id="KW-0903">Direct protein sequencing</keyword>
<keyword id="KW-0597">Phosphoprotein</keyword>
<keyword id="KW-1185">Reference proteome</keyword>
<keyword id="KW-0749">Sporulation</keyword>
<gene>
    <name type="primary">spoIIAA</name>
    <name type="ordered locus">BSU23470</name>
</gene>
<feature type="initiator methionine" description="Removed" evidence="2 4">
    <location>
        <position position="1"/>
    </location>
</feature>
<feature type="chain" id="PRO_0000194204" description="Anti-sigma F factor antagonist">
    <location>
        <begin position="2"/>
        <end position="117"/>
    </location>
</feature>
<feature type="domain" description="STAS" evidence="1">
    <location>
        <begin position="3"/>
        <end position="113"/>
    </location>
</feature>
<feature type="modified residue" description="Phosphoserine" evidence="3">
    <location>
        <position position="58"/>
    </location>
</feature>
<feature type="strand" evidence="6">
    <location>
        <begin position="7"/>
        <end position="10"/>
    </location>
</feature>
<feature type="strand" evidence="6">
    <location>
        <begin position="13"/>
        <end position="16"/>
    </location>
</feature>
<feature type="helix" evidence="6">
    <location>
        <begin position="26"/>
        <end position="38"/>
    </location>
</feature>
<feature type="strand" evidence="6">
    <location>
        <begin position="45"/>
        <end position="49"/>
    </location>
</feature>
<feature type="helix" evidence="6">
    <location>
        <begin position="60"/>
        <end position="74"/>
    </location>
</feature>
<feature type="turn" evidence="6">
    <location>
        <begin position="85"/>
        <end position="88"/>
    </location>
</feature>
<feature type="helix" evidence="6">
    <location>
        <begin position="89"/>
        <end position="94"/>
    </location>
</feature>
<feature type="helix" evidence="6">
    <location>
        <begin position="97"/>
        <end position="99"/>
    </location>
</feature>
<feature type="helix" evidence="6">
    <location>
        <begin position="106"/>
        <end position="108"/>
    </location>
</feature>
<feature type="helix" evidence="6">
    <location>
        <begin position="110"/>
        <end position="112"/>
    </location>
</feature>
<organism>
    <name type="scientific">Bacillus subtilis (strain 168)</name>
    <dbReference type="NCBI Taxonomy" id="224308"/>
    <lineage>
        <taxon>Bacteria</taxon>
        <taxon>Bacillati</taxon>
        <taxon>Bacillota</taxon>
        <taxon>Bacilli</taxon>
        <taxon>Bacillales</taxon>
        <taxon>Bacillaceae</taxon>
        <taxon>Bacillus</taxon>
    </lineage>
</organism>
<proteinExistence type="evidence at protein level"/>
<dbReference type="EMBL" id="M17643">
    <property type="protein sequence ID" value="AAA22789.1"/>
    <property type="status" value="ALT_INIT"/>
    <property type="molecule type" value="Genomic_DNA"/>
</dbReference>
<dbReference type="EMBL" id="D84432">
    <property type="protein sequence ID" value="BAA12653.1"/>
    <property type="molecule type" value="Genomic_DNA"/>
</dbReference>
<dbReference type="EMBL" id="AL009126">
    <property type="protein sequence ID" value="CAB14279.1"/>
    <property type="molecule type" value="Genomic_DNA"/>
</dbReference>
<dbReference type="PIR" id="A55646">
    <property type="entry name" value="A55646"/>
</dbReference>
<dbReference type="RefSeq" id="NP_390228.1">
    <property type="nucleotide sequence ID" value="NC_000964.3"/>
</dbReference>
<dbReference type="RefSeq" id="WP_004398633.1">
    <property type="nucleotide sequence ID" value="NZ_OZ025638.1"/>
</dbReference>
<dbReference type="PDB" id="1AUZ">
    <property type="method" value="NMR"/>
    <property type="chains" value="A=2-117"/>
</dbReference>
<dbReference type="PDB" id="1BUZ">
    <property type="method" value="NMR"/>
    <property type="chains" value="A=2-117"/>
</dbReference>
<dbReference type="PDBsum" id="1AUZ"/>
<dbReference type="PDBsum" id="1BUZ"/>
<dbReference type="SMR" id="P10727"/>
<dbReference type="FunCoup" id="P10727">
    <property type="interactions" value="345"/>
</dbReference>
<dbReference type="IntAct" id="P10727">
    <property type="interactions" value="1"/>
</dbReference>
<dbReference type="STRING" id="224308.BSU23470"/>
<dbReference type="iPTMnet" id="P10727"/>
<dbReference type="jPOST" id="P10727"/>
<dbReference type="PaxDb" id="224308-BSU23470"/>
<dbReference type="EnsemblBacteria" id="CAB14279">
    <property type="protein sequence ID" value="CAB14279"/>
    <property type="gene ID" value="BSU_23470"/>
</dbReference>
<dbReference type="GeneID" id="938730"/>
<dbReference type="KEGG" id="bsu:BSU23470"/>
<dbReference type="PATRIC" id="fig|224308.179.peg.2557"/>
<dbReference type="eggNOG" id="COG1366">
    <property type="taxonomic scope" value="Bacteria"/>
</dbReference>
<dbReference type="InParanoid" id="P10727"/>
<dbReference type="OrthoDB" id="9796601at2"/>
<dbReference type="PhylomeDB" id="P10727"/>
<dbReference type="BioCyc" id="BSUB:BSU23470-MONOMER"/>
<dbReference type="EvolutionaryTrace" id="P10727"/>
<dbReference type="Proteomes" id="UP000001570">
    <property type="component" value="Chromosome"/>
</dbReference>
<dbReference type="GO" id="GO:0043856">
    <property type="term" value="F:anti-sigma factor antagonist activity"/>
    <property type="evidence" value="ECO:0000318"/>
    <property type="project" value="GO_Central"/>
</dbReference>
<dbReference type="GO" id="GO:0045152">
    <property type="term" value="F:antisigma factor binding"/>
    <property type="evidence" value="ECO:0007669"/>
    <property type="project" value="InterPro"/>
</dbReference>
<dbReference type="GO" id="GO:0030435">
    <property type="term" value="P:sporulation resulting in formation of a cellular spore"/>
    <property type="evidence" value="ECO:0007669"/>
    <property type="project" value="UniProtKB-KW"/>
</dbReference>
<dbReference type="FunFam" id="3.30.750.24:FF:000005">
    <property type="entry name" value="Anti-sigma F factor antagonist"/>
    <property type="match status" value="1"/>
</dbReference>
<dbReference type="Gene3D" id="3.30.750.24">
    <property type="entry name" value="STAS domain"/>
    <property type="match status" value="1"/>
</dbReference>
<dbReference type="InterPro" id="IPR003658">
    <property type="entry name" value="Anti-sigma_ant"/>
</dbReference>
<dbReference type="InterPro" id="IPR014237">
    <property type="entry name" value="Anti-sigma_F_ant"/>
</dbReference>
<dbReference type="InterPro" id="IPR002645">
    <property type="entry name" value="STAS_dom"/>
</dbReference>
<dbReference type="InterPro" id="IPR036513">
    <property type="entry name" value="STAS_dom_sf"/>
</dbReference>
<dbReference type="NCBIfam" id="TIGR00377">
    <property type="entry name" value="ant_ant_sig"/>
    <property type="match status" value="1"/>
</dbReference>
<dbReference type="NCBIfam" id="TIGR02886">
    <property type="entry name" value="spore_II_AA"/>
    <property type="match status" value="1"/>
</dbReference>
<dbReference type="PANTHER" id="PTHR33495:SF2">
    <property type="entry name" value="ANTI-SIGMA FACTOR ANTAGONIST TM_1081-RELATED"/>
    <property type="match status" value="1"/>
</dbReference>
<dbReference type="PANTHER" id="PTHR33495">
    <property type="entry name" value="ANTI-SIGMA FACTOR ANTAGONIST TM_1081-RELATED-RELATED"/>
    <property type="match status" value="1"/>
</dbReference>
<dbReference type="Pfam" id="PF01740">
    <property type="entry name" value="STAS"/>
    <property type="match status" value="1"/>
</dbReference>
<dbReference type="SUPFAM" id="SSF52091">
    <property type="entry name" value="SpoIIaa-like"/>
    <property type="match status" value="1"/>
</dbReference>
<dbReference type="PROSITE" id="PS50801">
    <property type="entry name" value="STAS"/>
    <property type="match status" value="1"/>
</dbReference>
<sequence length="117" mass="12990">MSLGIDMNVKESVLCIRLTGELDHHTAETLKQKVTQSLEKDDIRHIVLNLEDLSFMDSSGLGVILGRYKQIKQIGGEMVVCAISPAVKRLFDMSGLFKIIRFEQSEQQALLTLGVAS</sequence>
<protein>
    <recommendedName>
        <fullName>Anti-sigma F factor antagonist</fullName>
    </recommendedName>
    <alternativeName>
        <fullName>Stage II sporulation protein AA</fullName>
    </alternativeName>
</protein>
<name>SP2AA_BACSU</name>
<evidence type="ECO:0000255" key="1">
    <source>
        <dbReference type="PROSITE-ProRule" id="PRU00198"/>
    </source>
</evidence>
<evidence type="ECO:0000269" key="2">
    <source>
    </source>
</evidence>
<evidence type="ECO:0000269" key="3">
    <source>
    </source>
</evidence>
<evidence type="ECO:0000269" key="4">
    <source>
    </source>
</evidence>
<evidence type="ECO:0000305" key="5"/>
<evidence type="ECO:0007829" key="6">
    <source>
        <dbReference type="PDB" id="1AUZ"/>
    </source>
</evidence>
<accession>P10727</accession>
<reference key="1">
    <citation type="journal article" date="1984" name="J. Gen. Microbiol.">
        <title>Nucleotide sequence of sporulation locus spoIIA in Bacillus subtilis.</title>
        <authorList>
            <person name="Fort P."/>
            <person name="Piggot P.J."/>
        </authorList>
    </citation>
    <scope>NUCLEOTIDE SEQUENCE [GENOMIC DNA]</scope>
    <source>
        <strain>CU267</strain>
    </source>
</reference>
<reference key="2">
    <citation type="journal article" date="1996" name="Microbiology">
        <title>Systematic sequencing of the 283 kb 210 degrees-232 degrees region of the Bacillus subtilis genome containing the skin element and many sporulation genes.</title>
        <authorList>
            <person name="Mizuno M."/>
            <person name="Masuda S."/>
            <person name="Takemaru K."/>
            <person name="Hosono S."/>
            <person name="Sato T."/>
            <person name="Takeuchi M."/>
            <person name="Kobayashi Y."/>
        </authorList>
    </citation>
    <scope>NUCLEOTIDE SEQUENCE [GENOMIC DNA]</scope>
    <source>
        <strain>168 / JH642</strain>
    </source>
</reference>
<reference key="3">
    <citation type="journal article" date="1997" name="Nature">
        <title>The complete genome sequence of the Gram-positive bacterium Bacillus subtilis.</title>
        <authorList>
            <person name="Kunst F."/>
            <person name="Ogasawara N."/>
            <person name="Moszer I."/>
            <person name="Albertini A.M."/>
            <person name="Alloni G."/>
            <person name="Azevedo V."/>
            <person name="Bertero M.G."/>
            <person name="Bessieres P."/>
            <person name="Bolotin A."/>
            <person name="Borchert S."/>
            <person name="Borriss R."/>
            <person name="Boursier L."/>
            <person name="Brans A."/>
            <person name="Braun M."/>
            <person name="Brignell S.C."/>
            <person name="Bron S."/>
            <person name="Brouillet S."/>
            <person name="Bruschi C.V."/>
            <person name="Caldwell B."/>
            <person name="Capuano V."/>
            <person name="Carter N.M."/>
            <person name="Choi S.-K."/>
            <person name="Codani J.-J."/>
            <person name="Connerton I.F."/>
            <person name="Cummings N.J."/>
            <person name="Daniel R.A."/>
            <person name="Denizot F."/>
            <person name="Devine K.M."/>
            <person name="Duesterhoeft A."/>
            <person name="Ehrlich S.D."/>
            <person name="Emmerson P.T."/>
            <person name="Entian K.-D."/>
            <person name="Errington J."/>
            <person name="Fabret C."/>
            <person name="Ferrari E."/>
            <person name="Foulger D."/>
            <person name="Fritz C."/>
            <person name="Fujita M."/>
            <person name="Fujita Y."/>
            <person name="Fuma S."/>
            <person name="Galizzi A."/>
            <person name="Galleron N."/>
            <person name="Ghim S.-Y."/>
            <person name="Glaser P."/>
            <person name="Goffeau A."/>
            <person name="Golightly E.J."/>
            <person name="Grandi G."/>
            <person name="Guiseppi G."/>
            <person name="Guy B.J."/>
            <person name="Haga K."/>
            <person name="Haiech J."/>
            <person name="Harwood C.R."/>
            <person name="Henaut A."/>
            <person name="Hilbert H."/>
            <person name="Holsappel S."/>
            <person name="Hosono S."/>
            <person name="Hullo M.-F."/>
            <person name="Itaya M."/>
            <person name="Jones L.-M."/>
            <person name="Joris B."/>
            <person name="Karamata D."/>
            <person name="Kasahara Y."/>
            <person name="Klaerr-Blanchard M."/>
            <person name="Klein C."/>
            <person name="Kobayashi Y."/>
            <person name="Koetter P."/>
            <person name="Koningstein G."/>
            <person name="Krogh S."/>
            <person name="Kumano M."/>
            <person name="Kurita K."/>
            <person name="Lapidus A."/>
            <person name="Lardinois S."/>
            <person name="Lauber J."/>
            <person name="Lazarevic V."/>
            <person name="Lee S.-M."/>
            <person name="Levine A."/>
            <person name="Liu H."/>
            <person name="Masuda S."/>
            <person name="Mauel C."/>
            <person name="Medigue C."/>
            <person name="Medina N."/>
            <person name="Mellado R.P."/>
            <person name="Mizuno M."/>
            <person name="Moestl D."/>
            <person name="Nakai S."/>
            <person name="Noback M."/>
            <person name="Noone D."/>
            <person name="O'Reilly M."/>
            <person name="Ogawa K."/>
            <person name="Ogiwara A."/>
            <person name="Oudega B."/>
            <person name="Park S.-H."/>
            <person name="Parro V."/>
            <person name="Pohl T.M."/>
            <person name="Portetelle D."/>
            <person name="Porwollik S."/>
            <person name="Prescott A.M."/>
            <person name="Presecan E."/>
            <person name="Pujic P."/>
            <person name="Purnelle B."/>
            <person name="Rapoport G."/>
            <person name="Rey M."/>
            <person name="Reynolds S."/>
            <person name="Rieger M."/>
            <person name="Rivolta C."/>
            <person name="Rocha E."/>
            <person name="Roche B."/>
            <person name="Rose M."/>
            <person name="Sadaie Y."/>
            <person name="Sato T."/>
            <person name="Scanlan E."/>
            <person name="Schleich S."/>
            <person name="Schroeter R."/>
            <person name="Scoffone F."/>
            <person name="Sekiguchi J."/>
            <person name="Sekowska A."/>
            <person name="Seror S.J."/>
            <person name="Serror P."/>
            <person name="Shin B.-S."/>
            <person name="Soldo B."/>
            <person name="Sorokin A."/>
            <person name="Tacconi E."/>
            <person name="Takagi T."/>
            <person name="Takahashi H."/>
            <person name="Takemaru K."/>
            <person name="Takeuchi M."/>
            <person name="Tamakoshi A."/>
            <person name="Tanaka T."/>
            <person name="Terpstra P."/>
            <person name="Tognoni A."/>
            <person name="Tosato V."/>
            <person name="Uchiyama S."/>
            <person name="Vandenbol M."/>
            <person name="Vannier F."/>
            <person name="Vassarotti A."/>
            <person name="Viari A."/>
            <person name="Wambutt R."/>
            <person name="Wedler E."/>
            <person name="Wedler H."/>
            <person name="Weitzenegger T."/>
            <person name="Winters P."/>
            <person name="Wipat A."/>
            <person name="Yamamoto H."/>
            <person name="Yamane K."/>
            <person name="Yasumoto K."/>
            <person name="Yata K."/>
            <person name="Yoshida K."/>
            <person name="Yoshikawa H.-F."/>
            <person name="Zumstein E."/>
            <person name="Yoshikawa H."/>
            <person name="Danchin A."/>
        </authorList>
    </citation>
    <scope>NUCLEOTIDE SEQUENCE [LARGE SCALE GENOMIC DNA]</scope>
    <source>
        <strain>168</strain>
    </source>
</reference>
<reference key="4">
    <citation type="journal article" date="1992" name="J. Bacteriol.">
        <title>Characterization of a Bacillus subtilis sporulation operon that includes genes for an RNA polymerase sigma factor and for a putative DD-carboxypeptidase.</title>
        <authorList>
            <person name="Wu J.-J."/>
            <person name="Schuch R."/>
            <person name="Piggot P.J."/>
        </authorList>
    </citation>
    <scope>PROTEIN SEQUENCE OF 2-4</scope>
</reference>
<reference key="5">
    <citation type="journal article" date="1993" name="Cell">
        <title>Sigma F, the first compartment-specific transcription factor of B. subtilis, is regulated by an anti-sigma factor that is also a protein kinase.</title>
        <authorList>
            <person name="Min K.-T."/>
            <person name="Hilditch C.M."/>
            <person name="Diederich B."/>
            <person name="Errington J."/>
            <person name="Yudkin M.D."/>
        </authorList>
    </citation>
    <scope>FUNCTION</scope>
    <scope>PROTEIN SEQUENCE OF 2-14</scope>
</reference>
<reference key="6">
    <citation type="journal article" date="1995" name="J. Bacteriol.">
        <title>Site of phosphorylation of SpoIIAA, the anti-anti-sigma factor for sporulation-specific sigma F of Bacillus subtilis.</title>
        <authorList>
            <person name="Najafi S.M.A."/>
            <person name="Willis A.C."/>
            <person name="Yudkin M.D."/>
        </authorList>
    </citation>
    <scope>PHOSPHORYLATION AT SER-58</scope>
    <scope>PROTEIN SEQUENCE OF 52-67</scope>
</reference>
<reference key="7">
    <citation type="journal article" date="1998" name="Proc. Natl. Acad. Sci. U.S.A.">
        <title>Solution structure of SpoIIAA, a phosphorylatable component of the system that regulates transcription factor sigmaF of Bacillus subtilis.</title>
        <authorList>
            <person name="Kovacs H."/>
            <person name="Comfort D."/>
            <person name="Lord M."/>
            <person name="Campbell I.D."/>
            <person name="Yudkin M.D."/>
        </authorList>
    </citation>
    <scope>STRUCTURE BY NMR</scope>
</reference>